<name>RL24_CHLPN</name>
<organism>
    <name type="scientific">Chlamydia pneumoniae</name>
    <name type="common">Chlamydophila pneumoniae</name>
    <dbReference type="NCBI Taxonomy" id="83558"/>
    <lineage>
        <taxon>Bacteria</taxon>
        <taxon>Pseudomonadati</taxon>
        <taxon>Chlamydiota</taxon>
        <taxon>Chlamydiia</taxon>
        <taxon>Chlamydiales</taxon>
        <taxon>Chlamydiaceae</taxon>
        <taxon>Chlamydia/Chlamydophila group</taxon>
        <taxon>Chlamydia</taxon>
    </lineage>
</organism>
<keyword id="KW-0687">Ribonucleoprotein</keyword>
<keyword id="KW-0689">Ribosomal protein</keyword>
<keyword id="KW-0694">RNA-binding</keyword>
<keyword id="KW-0699">rRNA-binding</keyword>
<feature type="chain" id="PRO_0000130642" description="Large ribosomal subunit protein uL24">
    <location>
        <begin position="1"/>
        <end position="111"/>
    </location>
</feature>
<evidence type="ECO:0000255" key="1">
    <source>
        <dbReference type="HAMAP-Rule" id="MF_01326"/>
    </source>
</evidence>
<evidence type="ECO:0000305" key="2"/>
<protein>
    <recommendedName>
        <fullName evidence="1">Large ribosomal subunit protein uL24</fullName>
    </recommendedName>
    <alternativeName>
        <fullName evidence="2">50S ribosomal protein L24</fullName>
    </alternativeName>
</protein>
<sequence length="111" mass="12426">MKKQNIRVGDKVFILAGNDKGKEGKVLSLTEDKVVVEGVNVRIKNIKRSQQNPKGKRISIEAPIHISNVRLTIAGEPAKLSVKVTEQGRELWQRRPDGTSQLYRLVRGKKG</sequence>
<comment type="function">
    <text evidence="1">One of two assembly initiator proteins, it binds directly to the 5'-end of the 23S rRNA, where it nucleates assembly of the 50S subunit.</text>
</comment>
<comment type="function">
    <text evidence="1">One of the proteins that surrounds the polypeptide exit tunnel on the outside of the subunit.</text>
</comment>
<comment type="subunit">
    <text evidence="1">Part of the 50S ribosomal subunit.</text>
</comment>
<comment type="similarity">
    <text evidence="1">Belongs to the universal ribosomal protein uL24 family.</text>
</comment>
<dbReference type="EMBL" id="AE001363">
    <property type="protein sequence ID" value="AAD18775.1"/>
    <property type="molecule type" value="Genomic_DNA"/>
</dbReference>
<dbReference type="EMBL" id="AE002161">
    <property type="protein sequence ID" value="AAF37994.1"/>
    <property type="molecule type" value="Genomic_DNA"/>
</dbReference>
<dbReference type="EMBL" id="BA000008">
    <property type="protein sequence ID" value="BAA98843.1"/>
    <property type="molecule type" value="Genomic_DNA"/>
</dbReference>
<dbReference type="EMBL" id="AE009440">
    <property type="protein sequence ID" value="AAP98591.1"/>
    <property type="molecule type" value="Genomic_DNA"/>
</dbReference>
<dbReference type="PIR" id="A86570">
    <property type="entry name" value="A86570"/>
</dbReference>
<dbReference type="PIR" id="F72054">
    <property type="entry name" value="F72054"/>
</dbReference>
<dbReference type="RefSeq" id="NP_224832.1">
    <property type="nucleotide sequence ID" value="NC_000922.1"/>
</dbReference>
<dbReference type="RefSeq" id="WP_010883274.1">
    <property type="nucleotide sequence ID" value="NZ_LN847257.1"/>
</dbReference>
<dbReference type="SMR" id="Q9Z7R8"/>
<dbReference type="STRING" id="406984.CPK_ORF00036"/>
<dbReference type="GeneID" id="45050686"/>
<dbReference type="KEGG" id="cpa:CP_0111"/>
<dbReference type="KEGG" id="cpj:rl24"/>
<dbReference type="KEGG" id="cpn:CPn_0636"/>
<dbReference type="KEGG" id="cpt:CpB0662"/>
<dbReference type="PATRIC" id="fig|115713.3.peg.706"/>
<dbReference type="eggNOG" id="COG0198">
    <property type="taxonomic scope" value="Bacteria"/>
</dbReference>
<dbReference type="HOGENOM" id="CLU_093315_2_1_0"/>
<dbReference type="OMA" id="HWSEAQK"/>
<dbReference type="OrthoDB" id="9807419at2"/>
<dbReference type="Proteomes" id="UP000000583">
    <property type="component" value="Chromosome"/>
</dbReference>
<dbReference type="Proteomes" id="UP000000801">
    <property type="component" value="Chromosome"/>
</dbReference>
<dbReference type="GO" id="GO:1990904">
    <property type="term" value="C:ribonucleoprotein complex"/>
    <property type="evidence" value="ECO:0007669"/>
    <property type="project" value="UniProtKB-KW"/>
</dbReference>
<dbReference type="GO" id="GO:0005840">
    <property type="term" value="C:ribosome"/>
    <property type="evidence" value="ECO:0007669"/>
    <property type="project" value="UniProtKB-KW"/>
</dbReference>
<dbReference type="GO" id="GO:0019843">
    <property type="term" value="F:rRNA binding"/>
    <property type="evidence" value="ECO:0007669"/>
    <property type="project" value="UniProtKB-UniRule"/>
</dbReference>
<dbReference type="GO" id="GO:0003735">
    <property type="term" value="F:structural constituent of ribosome"/>
    <property type="evidence" value="ECO:0007669"/>
    <property type="project" value="InterPro"/>
</dbReference>
<dbReference type="GO" id="GO:0006412">
    <property type="term" value="P:translation"/>
    <property type="evidence" value="ECO:0007669"/>
    <property type="project" value="UniProtKB-UniRule"/>
</dbReference>
<dbReference type="CDD" id="cd06089">
    <property type="entry name" value="KOW_RPL26"/>
    <property type="match status" value="1"/>
</dbReference>
<dbReference type="Gene3D" id="2.30.30.30">
    <property type="match status" value="1"/>
</dbReference>
<dbReference type="HAMAP" id="MF_01326_B">
    <property type="entry name" value="Ribosomal_uL24_B"/>
    <property type="match status" value="1"/>
</dbReference>
<dbReference type="InterPro" id="IPR005824">
    <property type="entry name" value="KOW"/>
</dbReference>
<dbReference type="InterPro" id="IPR014722">
    <property type="entry name" value="Rib_uL2_dom2"/>
</dbReference>
<dbReference type="InterPro" id="IPR003256">
    <property type="entry name" value="Ribosomal_uL24"/>
</dbReference>
<dbReference type="InterPro" id="IPR005825">
    <property type="entry name" value="Ribosomal_uL24_CS"/>
</dbReference>
<dbReference type="InterPro" id="IPR041988">
    <property type="entry name" value="Ribosomal_uL24_KOW"/>
</dbReference>
<dbReference type="InterPro" id="IPR008991">
    <property type="entry name" value="Translation_prot_SH3-like_sf"/>
</dbReference>
<dbReference type="NCBIfam" id="TIGR01079">
    <property type="entry name" value="rplX_bact"/>
    <property type="match status" value="1"/>
</dbReference>
<dbReference type="PANTHER" id="PTHR12903">
    <property type="entry name" value="MITOCHONDRIAL RIBOSOMAL PROTEIN L24"/>
    <property type="match status" value="1"/>
</dbReference>
<dbReference type="Pfam" id="PF00467">
    <property type="entry name" value="KOW"/>
    <property type="match status" value="1"/>
</dbReference>
<dbReference type="Pfam" id="PF17136">
    <property type="entry name" value="ribosomal_L24"/>
    <property type="match status" value="1"/>
</dbReference>
<dbReference type="SMART" id="SM00739">
    <property type="entry name" value="KOW"/>
    <property type="match status" value="1"/>
</dbReference>
<dbReference type="SUPFAM" id="SSF50104">
    <property type="entry name" value="Translation proteins SH3-like domain"/>
    <property type="match status" value="1"/>
</dbReference>
<dbReference type="PROSITE" id="PS01108">
    <property type="entry name" value="RIBOSOMAL_L24"/>
    <property type="match status" value="1"/>
</dbReference>
<gene>
    <name evidence="1" type="primary">rplX</name>
    <name type="synonym">rl24</name>
    <name type="ordered locus">CPn_0636</name>
    <name type="ordered locus">CP_0111</name>
    <name type="ordered locus">CpB0662</name>
</gene>
<accession>Q9Z7R8</accession>
<accession>Q9JQG7</accession>
<proteinExistence type="inferred from homology"/>
<reference key="1">
    <citation type="journal article" date="1999" name="Nat. Genet.">
        <title>Comparative genomes of Chlamydia pneumoniae and C. trachomatis.</title>
        <authorList>
            <person name="Kalman S."/>
            <person name="Mitchell W.P."/>
            <person name="Marathe R."/>
            <person name="Lammel C.J."/>
            <person name="Fan J."/>
            <person name="Hyman R.W."/>
            <person name="Olinger L."/>
            <person name="Grimwood J."/>
            <person name="Davis R.W."/>
            <person name="Stephens R.S."/>
        </authorList>
    </citation>
    <scope>NUCLEOTIDE SEQUENCE [LARGE SCALE GENOMIC DNA]</scope>
    <source>
        <strain>CWL029</strain>
    </source>
</reference>
<reference key="2">
    <citation type="journal article" date="2000" name="Nucleic Acids Res.">
        <title>Genome sequences of Chlamydia trachomatis MoPn and Chlamydia pneumoniae AR39.</title>
        <authorList>
            <person name="Read T.D."/>
            <person name="Brunham R.C."/>
            <person name="Shen C."/>
            <person name="Gill S.R."/>
            <person name="Heidelberg J.F."/>
            <person name="White O."/>
            <person name="Hickey E.K."/>
            <person name="Peterson J.D."/>
            <person name="Utterback T.R."/>
            <person name="Berry K.J."/>
            <person name="Bass S."/>
            <person name="Linher K.D."/>
            <person name="Weidman J.F."/>
            <person name="Khouri H.M."/>
            <person name="Craven B."/>
            <person name="Bowman C."/>
            <person name="Dodson R.J."/>
            <person name="Gwinn M.L."/>
            <person name="Nelson W.C."/>
            <person name="DeBoy R.T."/>
            <person name="Kolonay J.F."/>
            <person name="McClarty G."/>
            <person name="Salzberg S.L."/>
            <person name="Eisen J.A."/>
            <person name="Fraser C.M."/>
        </authorList>
    </citation>
    <scope>NUCLEOTIDE SEQUENCE [LARGE SCALE GENOMIC DNA]</scope>
    <source>
        <strain>AR39</strain>
    </source>
</reference>
<reference key="3">
    <citation type="journal article" date="2000" name="Nucleic Acids Res.">
        <title>Comparison of whole genome sequences of Chlamydia pneumoniae J138 from Japan and CWL029 from USA.</title>
        <authorList>
            <person name="Shirai M."/>
            <person name="Hirakawa H."/>
            <person name="Kimoto M."/>
            <person name="Tabuchi M."/>
            <person name="Kishi F."/>
            <person name="Ouchi K."/>
            <person name="Shiba T."/>
            <person name="Ishii K."/>
            <person name="Hattori M."/>
            <person name="Kuhara S."/>
            <person name="Nakazawa T."/>
        </authorList>
    </citation>
    <scope>NUCLEOTIDE SEQUENCE [LARGE SCALE GENOMIC DNA]</scope>
    <source>
        <strain>J138</strain>
    </source>
</reference>
<reference key="4">
    <citation type="submission" date="2002-05" db="EMBL/GenBank/DDBJ databases">
        <title>The genome sequence of Chlamydia pneumoniae TW183 and comparison with other Chlamydia strains based on whole genome sequence analysis.</title>
        <authorList>
            <person name="Geng M.M."/>
            <person name="Schuhmacher A."/>
            <person name="Muehldorfer I."/>
            <person name="Bensch K.W."/>
            <person name="Schaefer K.P."/>
            <person name="Schneider S."/>
            <person name="Pohl T."/>
            <person name="Essig A."/>
            <person name="Marre R."/>
            <person name="Melchers K."/>
        </authorList>
    </citation>
    <scope>NUCLEOTIDE SEQUENCE [LARGE SCALE GENOMIC DNA]</scope>
    <source>
        <strain>TW-183</strain>
    </source>
</reference>